<organism>
    <name type="scientific">Streptococcus gordonii (strain Challis / ATCC 35105 / BCRC 15272 / CH1 / DL1 / V288)</name>
    <dbReference type="NCBI Taxonomy" id="467705"/>
    <lineage>
        <taxon>Bacteria</taxon>
        <taxon>Bacillati</taxon>
        <taxon>Bacillota</taxon>
        <taxon>Bacilli</taxon>
        <taxon>Lactobacillales</taxon>
        <taxon>Streptococcaceae</taxon>
        <taxon>Streptococcus</taxon>
    </lineage>
</organism>
<name>AROA_STRGC</name>
<reference key="1">
    <citation type="journal article" date="2007" name="J. Bacteriol.">
        <title>Genome-wide transcriptional changes in Streptococcus gordonii in response to competence signaling peptide.</title>
        <authorList>
            <person name="Vickerman M.M."/>
            <person name="Iobst S."/>
            <person name="Jesionowski A.M."/>
            <person name="Gill S.R."/>
        </authorList>
    </citation>
    <scope>NUCLEOTIDE SEQUENCE [LARGE SCALE GENOMIC DNA]</scope>
    <source>
        <strain>Challis / ATCC 35105 / BCRC 15272 / CH1 / DL1 / V288</strain>
    </source>
</reference>
<feature type="chain" id="PRO_1000078004" description="3-phosphoshikimate 1-carboxyvinyltransferase">
    <location>
        <begin position="1"/>
        <end position="427"/>
    </location>
</feature>
<feature type="active site" description="Proton acceptor" evidence="1">
    <location>
        <position position="312"/>
    </location>
</feature>
<feature type="binding site" evidence="1">
    <location>
        <position position="20"/>
    </location>
    <ligand>
        <name>3-phosphoshikimate</name>
        <dbReference type="ChEBI" id="CHEBI:145989"/>
    </ligand>
</feature>
<feature type="binding site" evidence="1">
    <location>
        <position position="20"/>
    </location>
    <ligand>
        <name>phosphoenolpyruvate</name>
        <dbReference type="ChEBI" id="CHEBI:58702"/>
    </ligand>
</feature>
<feature type="binding site" evidence="1">
    <location>
        <position position="21"/>
    </location>
    <ligand>
        <name>3-phosphoshikimate</name>
        <dbReference type="ChEBI" id="CHEBI:145989"/>
    </ligand>
</feature>
<feature type="binding site" evidence="1">
    <location>
        <position position="25"/>
    </location>
    <ligand>
        <name>3-phosphoshikimate</name>
        <dbReference type="ChEBI" id="CHEBI:145989"/>
    </ligand>
</feature>
<feature type="binding site" evidence="1">
    <location>
        <position position="92"/>
    </location>
    <ligand>
        <name>phosphoenolpyruvate</name>
        <dbReference type="ChEBI" id="CHEBI:58702"/>
    </ligand>
</feature>
<feature type="binding site" evidence="1">
    <location>
        <position position="120"/>
    </location>
    <ligand>
        <name>phosphoenolpyruvate</name>
        <dbReference type="ChEBI" id="CHEBI:58702"/>
    </ligand>
</feature>
<feature type="binding site" evidence="1">
    <location>
        <position position="166"/>
    </location>
    <ligand>
        <name>3-phosphoshikimate</name>
        <dbReference type="ChEBI" id="CHEBI:145989"/>
    </ligand>
</feature>
<feature type="binding site" evidence="1">
    <location>
        <position position="168"/>
    </location>
    <ligand>
        <name>3-phosphoshikimate</name>
        <dbReference type="ChEBI" id="CHEBI:145989"/>
    </ligand>
</feature>
<feature type="binding site" evidence="1">
    <location>
        <position position="168"/>
    </location>
    <ligand>
        <name>phosphoenolpyruvate</name>
        <dbReference type="ChEBI" id="CHEBI:58702"/>
    </ligand>
</feature>
<feature type="binding site" evidence="1">
    <location>
        <position position="312"/>
    </location>
    <ligand>
        <name>3-phosphoshikimate</name>
        <dbReference type="ChEBI" id="CHEBI:145989"/>
    </ligand>
</feature>
<feature type="binding site" evidence="1">
    <location>
        <position position="339"/>
    </location>
    <ligand>
        <name>3-phosphoshikimate</name>
        <dbReference type="ChEBI" id="CHEBI:145989"/>
    </ligand>
</feature>
<feature type="binding site" evidence="1">
    <location>
        <position position="343"/>
    </location>
    <ligand>
        <name>phosphoenolpyruvate</name>
        <dbReference type="ChEBI" id="CHEBI:58702"/>
    </ligand>
</feature>
<feature type="binding site" evidence="1">
    <location>
        <position position="385"/>
    </location>
    <ligand>
        <name>phosphoenolpyruvate</name>
        <dbReference type="ChEBI" id="CHEBI:58702"/>
    </ligand>
</feature>
<sequence>MKLRTNAKGLRGSLRVPGDKSISHRSIIFGSLAKGVTKVHDILRGEDVLSTMQVFREMGVQIEDKGDLVEIHGCGFDGLQEPQRPLDMGNSGTSMRLIAGVLAGQNFSAQMVGDDSLSKRPMDRISLPLRRMGVEIAGQTERDLPPLTIHGNPNLKPIQYQLPIASAQVKSALIFAALQAQGESLIIEKDLTRNHTEDMLLQFGGQLKVDGKEIRVAGKQELQAQEVVVPGDISSAAFWLVAGLIVPSSKITLTNVGINETRTGILDVIQAMGGKLSVSEVDEVVKSATITVESSDLYGTEISGELIPRLIDELPIIALLATQAEGQTLIQDAEELKVKETDRIQVVADALNSMGADIQPTADGMIIQGKTSLKGASVHTYGDHRIGMMTAIAALLVKDGSVELSRAEAINTSYPDFFAHLEDLANV</sequence>
<comment type="function">
    <text evidence="1">Catalyzes the transfer of the enolpyruvyl moiety of phosphoenolpyruvate (PEP) to the 5-hydroxyl of shikimate-3-phosphate (S3P) to produce enolpyruvyl shikimate-3-phosphate and inorganic phosphate.</text>
</comment>
<comment type="catalytic activity">
    <reaction evidence="1">
        <text>3-phosphoshikimate + phosphoenolpyruvate = 5-O-(1-carboxyvinyl)-3-phosphoshikimate + phosphate</text>
        <dbReference type="Rhea" id="RHEA:21256"/>
        <dbReference type="ChEBI" id="CHEBI:43474"/>
        <dbReference type="ChEBI" id="CHEBI:57701"/>
        <dbReference type="ChEBI" id="CHEBI:58702"/>
        <dbReference type="ChEBI" id="CHEBI:145989"/>
        <dbReference type="EC" id="2.5.1.19"/>
    </reaction>
    <physiologicalReaction direction="left-to-right" evidence="1">
        <dbReference type="Rhea" id="RHEA:21257"/>
    </physiologicalReaction>
</comment>
<comment type="pathway">
    <text evidence="1">Metabolic intermediate biosynthesis; chorismate biosynthesis; chorismate from D-erythrose 4-phosphate and phosphoenolpyruvate: step 6/7.</text>
</comment>
<comment type="subunit">
    <text evidence="1">Monomer.</text>
</comment>
<comment type="subcellular location">
    <subcellularLocation>
        <location evidence="1">Cytoplasm</location>
    </subcellularLocation>
</comment>
<comment type="similarity">
    <text evidence="1">Belongs to the EPSP synthase family.</text>
</comment>
<dbReference type="EC" id="2.5.1.19" evidence="1"/>
<dbReference type="EMBL" id="CP000725">
    <property type="protein sequence ID" value="ABV10421.1"/>
    <property type="molecule type" value="Genomic_DNA"/>
</dbReference>
<dbReference type="RefSeq" id="WP_012130457.1">
    <property type="nucleotide sequence ID" value="NC_009785.1"/>
</dbReference>
<dbReference type="SMR" id="A8AXY9"/>
<dbReference type="STRING" id="467705.SGO_1368"/>
<dbReference type="KEGG" id="sgo:SGO_1368"/>
<dbReference type="eggNOG" id="COG0128">
    <property type="taxonomic scope" value="Bacteria"/>
</dbReference>
<dbReference type="HOGENOM" id="CLU_024321_0_1_9"/>
<dbReference type="UniPathway" id="UPA00053">
    <property type="reaction ID" value="UER00089"/>
</dbReference>
<dbReference type="Proteomes" id="UP000001131">
    <property type="component" value="Chromosome"/>
</dbReference>
<dbReference type="GO" id="GO:0005737">
    <property type="term" value="C:cytoplasm"/>
    <property type="evidence" value="ECO:0007669"/>
    <property type="project" value="UniProtKB-SubCell"/>
</dbReference>
<dbReference type="GO" id="GO:0003866">
    <property type="term" value="F:3-phosphoshikimate 1-carboxyvinyltransferase activity"/>
    <property type="evidence" value="ECO:0007669"/>
    <property type="project" value="UniProtKB-UniRule"/>
</dbReference>
<dbReference type="GO" id="GO:0008652">
    <property type="term" value="P:amino acid biosynthetic process"/>
    <property type="evidence" value="ECO:0007669"/>
    <property type="project" value="UniProtKB-KW"/>
</dbReference>
<dbReference type="GO" id="GO:0009073">
    <property type="term" value="P:aromatic amino acid family biosynthetic process"/>
    <property type="evidence" value="ECO:0007669"/>
    <property type="project" value="UniProtKB-KW"/>
</dbReference>
<dbReference type="GO" id="GO:0009423">
    <property type="term" value="P:chorismate biosynthetic process"/>
    <property type="evidence" value="ECO:0007669"/>
    <property type="project" value="UniProtKB-UniRule"/>
</dbReference>
<dbReference type="CDD" id="cd01556">
    <property type="entry name" value="EPSP_synthase"/>
    <property type="match status" value="1"/>
</dbReference>
<dbReference type="FunFam" id="3.65.10.10:FF:000005">
    <property type="entry name" value="3-phosphoshikimate 1-carboxyvinyltransferase"/>
    <property type="match status" value="1"/>
</dbReference>
<dbReference type="FunFam" id="3.65.10.10:FF:000006">
    <property type="entry name" value="3-phosphoshikimate 1-carboxyvinyltransferase"/>
    <property type="match status" value="1"/>
</dbReference>
<dbReference type="Gene3D" id="3.65.10.10">
    <property type="entry name" value="Enolpyruvate transferase domain"/>
    <property type="match status" value="2"/>
</dbReference>
<dbReference type="HAMAP" id="MF_00210">
    <property type="entry name" value="EPSP_synth"/>
    <property type="match status" value="1"/>
</dbReference>
<dbReference type="InterPro" id="IPR001986">
    <property type="entry name" value="Enolpyruvate_Tfrase_dom"/>
</dbReference>
<dbReference type="InterPro" id="IPR036968">
    <property type="entry name" value="Enolpyruvate_Tfrase_sf"/>
</dbReference>
<dbReference type="InterPro" id="IPR006264">
    <property type="entry name" value="EPSP_synthase"/>
</dbReference>
<dbReference type="InterPro" id="IPR023193">
    <property type="entry name" value="EPSP_synthase_CS"/>
</dbReference>
<dbReference type="InterPro" id="IPR013792">
    <property type="entry name" value="RNA3'P_cycl/enolpyr_Trfase_a/b"/>
</dbReference>
<dbReference type="NCBIfam" id="TIGR01356">
    <property type="entry name" value="aroA"/>
    <property type="match status" value="1"/>
</dbReference>
<dbReference type="PANTHER" id="PTHR21090">
    <property type="entry name" value="AROM/DEHYDROQUINATE SYNTHASE"/>
    <property type="match status" value="1"/>
</dbReference>
<dbReference type="PANTHER" id="PTHR21090:SF5">
    <property type="entry name" value="PENTAFUNCTIONAL AROM POLYPEPTIDE"/>
    <property type="match status" value="1"/>
</dbReference>
<dbReference type="Pfam" id="PF00275">
    <property type="entry name" value="EPSP_synthase"/>
    <property type="match status" value="1"/>
</dbReference>
<dbReference type="PIRSF" id="PIRSF000505">
    <property type="entry name" value="EPSPS"/>
    <property type="match status" value="1"/>
</dbReference>
<dbReference type="SUPFAM" id="SSF55205">
    <property type="entry name" value="EPT/RTPC-like"/>
    <property type="match status" value="1"/>
</dbReference>
<dbReference type="PROSITE" id="PS00104">
    <property type="entry name" value="EPSP_SYNTHASE_1"/>
    <property type="match status" value="1"/>
</dbReference>
<dbReference type="PROSITE" id="PS00885">
    <property type="entry name" value="EPSP_SYNTHASE_2"/>
    <property type="match status" value="1"/>
</dbReference>
<gene>
    <name evidence="1" type="primary">aroA</name>
    <name type="ordered locus">SGO_1368</name>
</gene>
<keyword id="KW-0028">Amino-acid biosynthesis</keyword>
<keyword id="KW-0057">Aromatic amino acid biosynthesis</keyword>
<keyword id="KW-0963">Cytoplasm</keyword>
<keyword id="KW-1185">Reference proteome</keyword>
<keyword id="KW-0808">Transferase</keyword>
<accession>A8AXY9</accession>
<evidence type="ECO:0000255" key="1">
    <source>
        <dbReference type="HAMAP-Rule" id="MF_00210"/>
    </source>
</evidence>
<protein>
    <recommendedName>
        <fullName evidence="1">3-phosphoshikimate 1-carboxyvinyltransferase</fullName>
        <ecNumber evidence="1">2.5.1.19</ecNumber>
    </recommendedName>
    <alternativeName>
        <fullName evidence="1">5-enolpyruvylshikimate-3-phosphate synthase</fullName>
        <shortName evidence="1">EPSP synthase</shortName>
        <shortName evidence="1">EPSPS</shortName>
    </alternativeName>
</protein>
<proteinExistence type="inferred from homology"/>